<dbReference type="EC" id="3.5.1.2" evidence="1"/>
<dbReference type="EMBL" id="AE005673">
    <property type="protein sequence ID" value="AAK22263.1"/>
    <property type="molecule type" value="Genomic_DNA"/>
</dbReference>
<dbReference type="PIR" id="C87283">
    <property type="entry name" value="C87283"/>
</dbReference>
<dbReference type="RefSeq" id="NP_419095.1">
    <property type="nucleotide sequence ID" value="NC_002696.2"/>
</dbReference>
<dbReference type="RefSeq" id="WP_010918165.1">
    <property type="nucleotide sequence ID" value="NC_002696.2"/>
</dbReference>
<dbReference type="SMR" id="Q9ABF2"/>
<dbReference type="STRING" id="190650.CC_0276"/>
<dbReference type="EnsemblBacteria" id="AAK22263">
    <property type="protein sequence ID" value="AAK22263"/>
    <property type="gene ID" value="CC_0276"/>
</dbReference>
<dbReference type="KEGG" id="ccr:CC_0276"/>
<dbReference type="PATRIC" id="fig|190650.5.peg.274"/>
<dbReference type="eggNOG" id="COG2066">
    <property type="taxonomic scope" value="Bacteria"/>
</dbReference>
<dbReference type="HOGENOM" id="CLU_027932_1_1_5"/>
<dbReference type="BioCyc" id="CAULO:CC0276-MONOMER"/>
<dbReference type="Proteomes" id="UP000001816">
    <property type="component" value="Chromosome"/>
</dbReference>
<dbReference type="GO" id="GO:0004359">
    <property type="term" value="F:glutaminase activity"/>
    <property type="evidence" value="ECO:0007669"/>
    <property type="project" value="UniProtKB-UniRule"/>
</dbReference>
<dbReference type="GO" id="GO:0006537">
    <property type="term" value="P:glutamate biosynthetic process"/>
    <property type="evidence" value="ECO:0007669"/>
    <property type="project" value="TreeGrafter"/>
</dbReference>
<dbReference type="GO" id="GO:0006543">
    <property type="term" value="P:glutamine catabolic process"/>
    <property type="evidence" value="ECO:0007669"/>
    <property type="project" value="TreeGrafter"/>
</dbReference>
<dbReference type="FunFam" id="3.40.710.10:FF:000005">
    <property type="entry name" value="Glutaminase"/>
    <property type="match status" value="1"/>
</dbReference>
<dbReference type="Gene3D" id="3.40.710.10">
    <property type="entry name" value="DD-peptidase/beta-lactamase superfamily"/>
    <property type="match status" value="1"/>
</dbReference>
<dbReference type="HAMAP" id="MF_00313">
    <property type="entry name" value="Glutaminase"/>
    <property type="match status" value="1"/>
</dbReference>
<dbReference type="InterPro" id="IPR012338">
    <property type="entry name" value="Beta-lactam/transpept-like"/>
</dbReference>
<dbReference type="InterPro" id="IPR015868">
    <property type="entry name" value="Glutaminase"/>
</dbReference>
<dbReference type="NCBIfam" id="TIGR03814">
    <property type="entry name" value="Gln_ase"/>
    <property type="match status" value="1"/>
</dbReference>
<dbReference type="NCBIfam" id="NF002133">
    <property type="entry name" value="PRK00971.1-2"/>
    <property type="match status" value="1"/>
</dbReference>
<dbReference type="PANTHER" id="PTHR12544">
    <property type="entry name" value="GLUTAMINASE"/>
    <property type="match status" value="1"/>
</dbReference>
<dbReference type="PANTHER" id="PTHR12544:SF29">
    <property type="entry name" value="GLUTAMINASE"/>
    <property type="match status" value="1"/>
</dbReference>
<dbReference type="Pfam" id="PF04960">
    <property type="entry name" value="Glutaminase"/>
    <property type="match status" value="1"/>
</dbReference>
<dbReference type="SUPFAM" id="SSF56601">
    <property type="entry name" value="beta-lactamase/transpeptidase-like"/>
    <property type="match status" value="1"/>
</dbReference>
<evidence type="ECO:0000255" key="1">
    <source>
        <dbReference type="HAMAP-Rule" id="MF_00313"/>
    </source>
</evidence>
<comment type="catalytic activity">
    <reaction evidence="1">
        <text>L-glutamine + H2O = L-glutamate + NH4(+)</text>
        <dbReference type="Rhea" id="RHEA:15889"/>
        <dbReference type="ChEBI" id="CHEBI:15377"/>
        <dbReference type="ChEBI" id="CHEBI:28938"/>
        <dbReference type="ChEBI" id="CHEBI:29985"/>
        <dbReference type="ChEBI" id="CHEBI:58359"/>
        <dbReference type="EC" id="3.5.1.2"/>
    </reaction>
</comment>
<comment type="subunit">
    <text evidence="1">Homotetramer.</text>
</comment>
<comment type="similarity">
    <text evidence="1">Belongs to the glutaminase family.</text>
</comment>
<name>GLSA_CAUVC</name>
<feature type="chain" id="PRO_0000110600" description="Glutaminase">
    <location>
        <begin position="1"/>
        <end position="306"/>
    </location>
</feature>
<feature type="binding site" evidence="1">
    <location>
        <position position="66"/>
    </location>
    <ligand>
        <name>substrate</name>
    </ligand>
</feature>
<feature type="binding site" evidence="1">
    <location>
        <position position="116"/>
    </location>
    <ligand>
        <name>substrate</name>
    </ligand>
</feature>
<feature type="binding site" evidence="1">
    <location>
        <position position="159"/>
    </location>
    <ligand>
        <name>substrate</name>
    </ligand>
</feature>
<feature type="binding site" evidence="1">
    <location>
        <position position="166"/>
    </location>
    <ligand>
        <name>substrate</name>
    </ligand>
</feature>
<feature type="binding site" evidence="1">
    <location>
        <position position="190"/>
    </location>
    <ligand>
        <name>substrate</name>
    </ligand>
</feature>
<feature type="binding site" evidence="1">
    <location>
        <position position="242"/>
    </location>
    <ligand>
        <name>substrate</name>
    </ligand>
</feature>
<feature type="binding site" evidence="1">
    <location>
        <position position="260"/>
    </location>
    <ligand>
        <name>substrate</name>
    </ligand>
</feature>
<sequence length="306" mass="32286">MKALSIPDVLAEVAVLVRPHFGKGKPADYIPQLATVPGGKFGMAVRMVDGDEHVIGDADEGFSVQSITKVFALGLALNRLGDEIWTRVGKEPSGTPFNHLSLLEAEQGVPRNPFINAGALAVTDVLMDVTRDPAALVRDFGGFLCGERLEIDPAVATSELAHAWQNRAIASLMRAKGTITHDPEAVVAAYCRQCALSMSCRQLARAFLPLAAGGFSPIAQETVFPERLTRRLNALLLTCGIYDSVGSFAYRVGLPAKSGVGGGIVAVVPGKATVAVWSPELDRFGTSVVGTAALEAFSQITNCSVL</sequence>
<proteinExistence type="inferred from homology"/>
<keyword id="KW-0378">Hydrolase</keyword>
<keyword id="KW-1185">Reference proteome</keyword>
<gene>
    <name evidence="1" type="primary">glsA</name>
    <name type="ordered locus">CC_0276</name>
</gene>
<organism>
    <name type="scientific">Caulobacter vibrioides (strain ATCC 19089 / CIP 103742 / CB 15)</name>
    <name type="common">Caulobacter crescentus</name>
    <dbReference type="NCBI Taxonomy" id="190650"/>
    <lineage>
        <taxon>Bacteria</taxon>
        <taxon>Pseudomonadati</taxon>
        <taxon>Pseudomonadota</taxon>
        <taxon>Alphaproteobacteria</taxon>
        <taxon>Caulobacterales</taxon>
        <taxon>Caulobacteraceae</taxon>
        <taxon>Caulobacter</taxon>
    </lineage>
</organism>
<protein>
    <recommendedName>
        <fullName evidence="1">Glutaminase</fullName>
        <ecNumber evidence="1">3.5.1.2</ecNumber>
    </recommendedName>
</protein>
<reference key="1">
    <citation type="journal article" date="2001" name="Proc. Natl. Acad. Sci. U.S.A.">
        <title>Complete genome sequence of Caulobacter crescentus.</title>
        <authorList>
            <person name="Nierman W.C."/>
            <person name="Feldblyum T.V."/>
            <person name="Laub M.T."/>
            <person name="Paulsen I.T."/>
            <person name="Nelson K.E."/>
            <person name="Eisen J.A."/>
            <person name="Heidelberg J.F."/>
            <person name="Alley M.R.K."/>
            <person name="Ohta N."/>
            <person name="Maddock J.R."/>
            <person name="Potocka I."/>
            <person name="Nelson W.C."/>
            <person name="Newton A."/>
            <person name="Stephens C."/>
            <person name="Phadke N.D."/>
            <person name="Ely B."/>
            <person name="DeBoy R.T."/>
            <person name="Dodson R.J."/>
            <person name="Durkin A.S."/>
            <person name="Gwinn M.L."/>
            <person name="Haft D.H."/>
            <person name="Kolonay J.F."/>
            <person name="Smit J."/>
            <person name="Craven M.B."/>
            <person name="Khouri H.M."/>
            <person name="Shetty J."/>
            <person name="Berry K.J."/>
            <person name="Utterback T.R."/>
            <person name="Tran K."/>
            <person name="Wolf A.M."/>
            <person name="Vamathevan J.J."/>
            <person name="Ermolaeva M.D."/>
            <person name="White O."/>
            <person name="Salzberg S.L."/>
            <person name="Venter J.C."/>
            <person name="Shapiro L."/>
            <person name="Fraser C.M."/>
        </authorList>
    </citation>
    <scope>NUCLEOTIDE SEQUENCE [LARGE SCALE GENOMIC DNA]</scope>
    <source>
        <strain>ATCC 19089 / CIP 103742 / CB 15</strain>
    </source>
</reference>
<accession>Q9ABF2</accession>